<evidence type="ECO:0000250" key="1"/>
<evidence type="ECO:0000255" key="2"/>
<evidence type="ECO:0000303" key="3">
    <source>
    </source>
</evidence>
<evidence type="ECO:0000305" key="4"/>
<comment type="function">
    <text>Probable ion channel inhibitor.</text>
</comment>
<comment type="subcellular location">
    <subcellularLocation>
        <location evidence="1">Secreted</location>
    </subcellularLocation>
</comment>
<comment type="tissue specificity">
    <text>Expressed by the venom gland.</text>
</comment>
<comment type="domain">
    <text evidence="1">The presence of a 'disulfide through disulfide knot' structurally defines this protein as a knottin.</text>
</comment>
<comment type="similarity">
    <text evidence="4">Belongs to the neurotoxin 10 (Hwtx-1) family. 64 (Jztx-20) subfamily.</text>
</comment>
<reference key="1">
    <citation type="journal article" date="2008" name="Cell. Mol. Life Sci.">
        <title>Molecular diversity and evolution of cystine knot toxins of the tarantula Chilobrachys jingzhao.</title>
        <authorList>
            <person name="Chen J."/>
            <person name="Deng M."/>
            <person name="He Q."/>
            <person name="Meng E."/>
            <person name="Jiang L."/>
            <person name="Liao Z."/>
            <person name="Rong M."/>
            <person name="Liang S."/>
        </authorList>
    </citation>
    <scope>NUCLEOTIDE SEQUENCE [LARGE SCALE MRNA]</scope>
    <source>
        <tissue>Venom gland</tissue>
    </source>
</reference>
<proteinExistence type="evidence at transcript level"/>
<dbReference type="EMBL" id="EU233900">
    <property type="protein sequence ID" value="ABY71719.1"/>
    <property type="molecule type" value="mRNA"/>
</dbReference>
<dbReference type="ArachnoServer" id="AS000848">
    <property type="toxin name" value="U23-theraphotoxin-Cg1a"/>
</dbReference>
<dbReference type="GO" id="GO:0005576">
    <property type="term" value="C:extracellular region"/>
    <property type="evidence" value="ECO:0007669"/>
    <property type="project" value="UniProtKB-SubCell"/>
</dbReference>
<dbReference type="GO" id="GO:0099106">
    <property type="term" value="F:ion channel regulator activity"/>
    <property type="evidence" value="ECO:0007669"/>
    <property type="project" value="UniProtKB-KW"/>
</dbReference>
<dbReference type="GO" id="GO:0090729">
    <property type="term" value="F:toxin activity"/>
    <property type="evidence" value="ECO:0007669"/>
    <property type="project" value="UniProtKB-KW"/>
</dbReference>
<protein>
    <recommendedName>
        <fullName>U23-theraphotoxin-Cg1a 1</fullName>
        <shortName>U23-TRTX-Cg1a</shortName>
    </recommendedName>
    <alternativeName>
        <fullName evidence="3">Jingzhaotoxin-20</fullName>
        <shortName evidence="3">JZTX-20</shortName>
    </alternativeName>
</protein>
<organism>
    <name type="scientific">Chilobrachys guangxiensis</name>
    <name type="common">Chinese earth tiger tarantula</name>
    <name type="synonym">Chilobrachys jingzhao</name>
    <dbReference type="NCBI Taxonomy" id="278060"/>
    <lineage>
        <taxon>Eukaryota</taxon>
        <taxon>Metazoa</taxon>
        <taxon>Ecdysozoa</taxon>
        <taxon>Arthropoda</taxon>
        <taxon>Chelicerata</taxon>
        <taxon>Arachnida</taxon>
        <taxon>Araneae</taxon>
        <taxon>Mygalomorphae</taxon>
        <taxon>Theraphosidae</taxon>
        <taxon>Chilobrachys</taxon>
    </lineage>
</organism>
<accession>B1P1G9</accession>
<keyword id="KW-1015">Disulfide bond</keyword>
<keyword id="KW-0872">Ion channel impairing toxin</keyword>
<keyword id="KW-0960">Knottin</keyword>
<keyword id="KW-0964">Secreted</keyword>
<keyword id="KW-0732">Signal</keyword>
<keyword id="KW-0800">Toxin</keyword>
<feature type="signal peptide" evidence="2">
    <location>
        <begin position="1"/>
        <end position="21"/>
    </location>
</feature>
<feature type="propeptide" id="PRO_0000398435" evidence="1">
    <location>
        <begin position="22"/>
        <end position="49"/>
    </location>
</feature>
<feature type="peptide" id="PRO_0000398436" description="U23-theraphotoxin-Cg1a 1">
    <location>
        <begin position="50"/>
        <end position="78"/>
    </location>
</feature>
<feature type="disulfide bond" evidence="1">
    <location>
        <begin position="50"/>
        <end position="64"/>
    </location>
</feature>
<feature type="disulfide bond" evidence="1">
    <location>
        <begin position="57"/>
        <end position="69"/>
    </location>
</feature>
<feature type="disulfide bond" evidence="1">
    <location>
        <begin position="63"/>
        <end position="75"/>
    </location>
</feature>
<sequence length="78" mass="8788">MKTSVLVTVLGLAVISVLCSASQDEEQDMYDELLSAVFEVNDELQSEARCGEKNDRCKTNQDCCSGFRCTKFRRCGRR</sequence>
<name>JZ20A_CHIGU</name>